<name>ITPA_CAEEL</name>
<feature type="chain" id="PRO_0000413113" description="Inosine triphosphate pyrophosphatase">
    <location>
        <begin position="1"/>
        <end position="184"/>
    </location>
</feature>
<feature type="binding site" evidence="1">
    <location>
        <begin position="10"/>
        <end position="15"/>
    </location>
    <ligand>
        <name>ITP</name>
        <dbReference type="ChEBI" id="CHEBI:61402"/>
    </ligand>
</feature>
<feature type="binding site" evidence="1">
    <location>
        <position position="37"/>
    </location>
    <ligand>
        <name>Mg(2+)</name>
        <dbReference type="ChEBI" id="CHEBI:18420"/>
    </ligand>
</feature>
<feature type="binding site" evidence="1">
    <location>
        <position position="49"/>
    </location>
    <ligand>
        <name>ITP</name>
        <dbReference type="ChEBI" id="CHEBI:61402"/>
    </ligand>
</feature>
<feature type="binding site" evidence="1">
    <location>
        <begin position="65"/>
        <end position="66"/>
    </location>
    <ligand>
        <name>ITP</name>
        <dbReference type="ChEBI" id="CHEBI:61402"/>
    </ligand>
</feature>
<feature type="binding site" evidence="1">
    <location>
        <position position="82"/>
    </location>
    <ligand>
        <name>ITP</name>
        <dbReference type="ChEBI" id="CHEBI:61402"/>
    </ligand>
</feature>
<feature type="binding site" evidence="1">
    <location>
        <begin position="141"/>
        <end position="144"/>
    </location>
    <ligand>
        <name>ITP</name>
        <dbReference type="ChEBI" id="CHEBI:61402"/>
    </ligand>
</feature>
<feature type="binding site" evidence="1">
    <location>
        <position position="164"/>
    </location>
    <ligand>
        <name>ITP</name>
        <dbReference type="ChEBI" id="CHEBI:61402"/>
    </ligand>
</feature>
<feature type="binding site" evidence="1">
    <location>
        <begin position="169"/>
        <end position="170"/>
    </location>
    <ligand>
        <name>ITP</name>
        <dbReference type="ChEBI" id="CHEBI:61402"/>
    </ligand>
</feature>
<reference key="1">
    <citation type="journal article" date="2001" name="Genetics">
        <title>Regulation of physiological rates in Caenorhabditis elegans by a tRNA-modifying enzyme in the mitochondria.</title>
        <authorList>
            <person name="Lemieux J."/>
            <person name="Lakowski B."/>
            <person name="Webb A."/>
            <person name="Meng Y."/>
            <person name="Ubach A."/>
            <person name="Bussiere F."/>
            <person name="Barnes T."/>
            <person name="Hekimi S."/>
        </authorList>
    </citation>
    <scope>NUCLEOTIDE SEQUENCE [MRNA]</scope>
    <source>
        <strain>Bristol N2</strain>
    </source>
</reference>
<reference key="2">
    <citation type="journal article" date="1998" name="Science">
        <title>Genome sequence of the nematode C. elegans: a platform for investigating biology.</title>
        <authorList>
            <consortium name="The C. elegans sequencing consortium"/>
        </authorList>
    </citation>
    <scope>NUCLEOTIDE SEQUENCE [LARGE SCALE GENOMIC DNA]</scope>
    <source>
        <strain>Bristol N2</strain>
    </source>
</reference>
<gene>
    <name evidence="1" type="primary">hap-1</name>
    <name type="ORF">ZC395.7</name>
</gene>
<comment type="function">
    <text evidence="1">Pyrophosphatase that hydrolyzes non-canonical purine nucleotides such as inosine triphosphate (ITP), deoxyinosine triphosphate (dITP) or xanthosine 5'-triphosphate (XTP) to their respective monophosphate derivatives. The enzyme does not distinguish between the deoxy- and ribose forms. Probably excludes non-canonical purines from RNA and DNA precursor pools, thus preventing their incorporation into RNA and DNA and avoiding chromosomal lesions.</text>
</comment>
<comment type="catalytic activity">
    <reaction evidence="1">
        <text>ITP + H2O = IMP + diphosphate + H(+)</text>
        <dbReference type="Rhea" id="RHEA:29399"/>
        <dbReference type="ChEBI" id="CHEBI:15377"/>
        <dbReference type="ChEBI" id="CHEBI:15378"/>
        <dbReference type="ChEBI" id="CHEBI:33019"/>
        <dbReference type="ChEBI" id="CHEBI:58053"/>
        <dbReference type="ChEBI" id="CHEBI:61402"/>
        <dbReference type="EC" id="3.6.1.66"/>
    </reaction>
    <physiologicalReaction direction="left-to-right" evidence="1">
        <dbReference type="Rhea" id="RHEA:29400"/>
    </physiologicalReaction>
</comment>
<comment type="catalytic activity">
    <reaction evidence="1">
        <text>dITP + H2O = dIMP + diphosphate + H(+)</text>
        <dbReference type="Rhea" id="RHEA:28342"/>
        <dbReference type="ChEBI" id="CHEBI:15377"/>
        <dbReference type="ChEBI" id="CHEBI:15378"/>
        <dbReference type="ChEBI" id="CHEBI:33019"/>
        <dbReference type="ChEBI" id="CHEBI:61194"/>
        <dbReference type="ChEBI" id="CHEBI:61382"/>
        <dbReference type="EC" id="3.6.1.66"/>
    </reaction>
    <physiologicalReaction direction="left-to-right" evidence="1">
        <dbReference type="Rhea" id="RHEA:28343"/>
    </physiologicalReaction>
</comment>
<comment type="catalytic activity">
    <reaction evidence="1">
        <text>XTP + H2O = XMP + diphosphate + H(+)</text>
        <dbReference type="Rhea" id="RHEA:28610"/>
        <dbReference type="ChEBI" id="CHEBI:15377"/>
        <dbReference type="ChEBI" id="CHEBI:15378"/>
        <dbReference type="ChEBI" id="CHEBI:33019"/>
        <dbReference type="ChEBI" id="CHEBI:57464"/>
        <dbReference type="ChEBI" id="CHEBI:61314"/>
        <dbReference type="EC" id="3.6.1.66"/>
    </reaction>
    <physiologicalReaction direction="left-to-right" evidence="1">
        <dbReference type="Rhea" id="RHEA:28611"/>
    </physiologicalReaction>
</comment>
<comment type="cofactor">
    <cofactor evidence="1">
        <name>Mg(2+)</name>
        <dbReference type="ChEBI" id="CHEBI:18420"/>
    </cofactor>
    <cofactor evidence="1">
        <name>Mn(2+)</name>
        <dbReference type="ChEBI" id="CHEBI:29035"/>
    </cofactor>
    <text evidence="1">Binds 1 divalent metal cation per subunit; can use either Mg(2+) or Mn(2+).</text>
</comment>
<comment type="subunit">
    <text evidence="1">Homodimer.</text>
</comment>
<comment type="subcellular location">
    <subcellularLocation>
        <location evidence="1">Cytoplasm</location>
    </subcellularLocation>
</comment>
<comment type="similarity">
    <text evidence="1">Belongs to the HAM1 NTPase family.</text>
</comment>
<keyword id="KW-0963">Cytoplasm</keyword>
<keyword id="KW-0378">Hydrolase</keyword>
<keyword id="KW-0460">Magnesium</keyword>
<keyword id="KW-0464">Manganese</keyword>
<keyword id="KW-0479">Metal-binding</keyword>
<keyword id="KW-0546">Nucleotide metabolism</keyword>
<keyword id="KW-0547">Nucleotide-binding</keyword>
<keyword id="KW-1185">Reference proteome</keyword>
<dbReference type="EC" id="3.6.1.66" evidence="1"/>
<dbReference type="EMBL" id="AY052772">
    <property type="protein sequence ID" value="AAL14111.1"/>
    <property type="molecule type" value="mRNA"/>
</dbReference>
<dbReference type="EMBL" id="FO080775">
    <property type="protein sequence ID" value="CCD66665.1"/>
    <property type="molecule type" value="Genomic_DNA"/>
</dbReference>
<dbReference type="RefSeq" id="NP_498121.1">
    <property type="nucleotide sequence ID" value="NM_065720.4"/>
</dbReference>
<dbReference type="SMR" id="Q9GYG4"/>
<dbReference type="BioGRID" id="40955">
    <property type="interactions" value="2"/>
</dbReference>
<dbReference type="FunCoup" id="Q9GYG4">
    <property type="interactions" value="2519"/>
</dbReference>
<dbReference type="IntAct" id="Q9GYG4">
    <property type="interactions" value="1"/>
</dbReference>
<dbReference type="STRING" id="6239.ZC395.7.1"/>
<dbReference type="PaxDb" id="6239-ZC395.7"/>
<dbReference type="PeptideAtlas" id="Q9GYG4"/>
<dbReference type="EnsemblMetazoa" id="ZC395.7.1">
    <property type="protein sequence ID" value="ZC395.7.1"/>
    <property type="gene ID" value="WBGene00001823"/>
</dbReference>
<dbReference type="GeneID" id="175724"/>
<dbReference type="KEGG" id="cel:CELE_ZC395.7"/>
<dbReference type="UCSC" id="ZC395.7">
    <property type="organism name" value="c. elegans"/>
</dbReference>
<dbReference type="AGR" id="WB:WBGene00001823"/>
<dbReference type="CTD" id="175724"/>
<dbReference type="WormBase" id="ZC395.7">
    <property type="protein sequence ID" value="CE25662"/>
    <property type="gene ID" value="WBGene00001823"/>
    <property type="gene designation" value="hap-1"/>
</dbReference>
<dbReference type="eggNOG" id="KOG3222">
    <property type="taxonomic scope" value="Eukaryota"/>
</dbReference>
<dbReference type="GeneTree" id="ENSGT00390000015399"/>
<dbReference type="HOGENOM" id="CLU_082080_1_1_1"/>
<dbReference type="InParanoid" id="Q9GYG4"/>
<dbReference type="OMA" id="YDPIFQP"/>
<dbReference type="OrthoDB" id="6288734at2759"/>
<dbReference type="PhylomeDB" id="Q9GYG4"/>
<dbReference type="Reactome" id="R-CEL-74259">
    <property type="pathway name" value="Purine catabolism"/>
</dbReference>
<dbReference type="Reactome" id="R-CEL-9755088">
    <property type="pathway name" value="Ribavirin ADME"/>
</dbReference>
<dbReference type="PRO" id="PR:Q9GYG4"/>
<dbReference type="Proteomes" id="UP000001940">
    <property type="component" value="Chromosome III"/>
</dbReference>
<dbReference type="Bgee" id="WBGene00001823">
    <property type="expression patterns" value="Expressed in germ line (C elegans) and 4 other cell types or tissues"/>
</dbReference>
<dbReference type="GO" id="GO:0005737">
    <property type="term" value="C:cytoplasm"/>
    <property type="evidence" value="ECO:0000318"/>
    <property type="project" value="GO_Central"/>
</dbReference>
<dbReference type="GO" id="GO:0035870">
    <property type="term" value="F:dITP diphosphatase activity"/>
    <property type="evidence" value="ECO:0007669"/>
    <property type="project" value="RHEA"/>
</dbReference>
<dbReference type="GO" id="GO:0036220">
    <property type="term" value="F:ITP diphosphatase activity"/>
    <property type="evidence" value="ECO:0007669"/>
    <property type="project" value="RHEA"/>
</dbReference>
<dbReference type="GO" id="GO:0046872">
    <property type="term" value="F:metal ion binding"/>
    <property type="evidence" value="ECO:0007669"/>
    <property type="project" value="UniProtKB-KW"/>
</dbReference>
<dbReference type="GO" id="GO:0047429">
    <property type="term" value="F:nucleoside triphosphate diphosphatase activity"/>
    <property type="evidence" value="ECO:0000318"/>
    <property type="project" value="GO_Central"/>
</dbReference>
<dbReference type="GO" id="GO:0000166">
    <property type="term" value="F:nucleotide binding"/>
    <property type="evidence" value="ECO:0007669"/>
    <property type="project" value="UniProtKB-KW"/>
</dbReference>
<dbReference type="GO" id="GO:0036222">
    <property type="term" value="F:XTP diphosphatase activity"/>
    <property type="evidence" value="ECO:0007669"/>
    <property type="project" value="RHEA"/>
</dbReference>
<dbReference type="GO" id="GO:0009204">
    <property type="term" value="P:deoxyribonucleoside triphosphate catabolic process"/>
    <property type="evidence" value="ECO:0007669"/>
    <property type="project" value="UniProtKB-UniRule"/>
</dbReference>
<dbReference type="GO" id="GO:0009143">
    <property type="term" value="P:nucleoside triphosphate catabolic process"/>
    <property type="evidence" value="ECO:0000318"/>
    <property type="project" value="GO_Central"/>
</dbReference>
<dbReference type="GO" id="GO:0009117">
    <property type="term" value="P:nucleotide metabolic process"/>
    <property type="evidence" value="ECO:0007669"/>
    <property type="project" value="UniProtKB-KW"/>
</dbReference>
<dbReference type="CDD" id="cd00515">
    <property type="entry name" value="HAM1"/>
    <property type="match status" value="1"/>
</dbReference>
<dbReference type="FunFam" id="3.90.950.10:FF:000003">
    <property type="entry name" value="Inosine triphosphate pyrophosphatase"/>
    <property type="match status" value="1"/>
</dbReference>
<dbReference type="Gene3D" id="3.90.950.10">
    <property type="match status" value="1"/>
</dbReference>
<dbReference type="HAMAP" id="MF_03148">
    <property type="entry name" value="HAM1_NTPase"/>
    <property type="match status" value="1"/>
</dbReference>
<dbReference type="InterPro" id="IPR027502">
    <property type="entry name" value="ITPase"/>
</dbReference>
<dbReference type="InterPro" id="IPR029001">
    <property type="entry name" value="ITPase-like_fam"/>
</dbReference>
<dbReference type="InterPro" id="IPR002637">
    <property type="entry name" value="RdgB/HAM1"/>
</dbReference>
<dbReference type="NCBIfam" id="TIGR00042">
    <property type="entry name" value="RdgB/HAM1 family non-canonical purine NTP pyrophosphatase"/>
    <property type="match status" value="1"/>
</dbReference>
<dbReference type="PANTHER" id="PTHR11067:SF9">
    <property type="entry name" value="INOSINE TRIPHOSPHATE PYROPHOSPHATASE"/>
    <property type="match status" value="1"/>
</dbReference>
<dbReference type="PANTHER" id="PTHR11067">
    <property type="entry name" value="INOSINE TRIPHOSPHATE PYROPHOSPHATASE/HAM1 PROTEIN"/>
    <property type="match status" value="1"/>
</dbReference>
<dbReference type="Pfam" id="PF01725">
    <property type="entry name" value="Ham1p_like"/>
    <property type="match status" value="1"/>
</dbReference>
<dbReference type="SUPFAM" id="SSF52972">
    <property type="entry name" value="ITPase-like"/>
    <property type="match status" value="1"/>
</dbReference>
<evidence type="ECO:0000255" key="1">
    <source>
        <dbReference type="HAMAP-Rule" id="MF_03148"/>
    </source>
</evidence>
<organism>
    <name type="scientific">Caenorhabditis elegans</name>
    <dbReference type="NCBI Taxonomy" id="6239"/>
    <lineage>
        <taxon>Eukaryota</taxon>
        <taxon>Metazoa</taxon>
        <taxon>Ecdysozoa</taxon>
        <taxon>Nematoda</taxon>
        <taxon>Chromadorea</taxon>
        <taxon>Rhabditida</taxon>
        <taxon>Rhabditina</taxon>
        <taxon>Rhabditomorpha</taxon>
        <taxon>Rhabditoidea</taxon>
        <taxon>Rhabditidae</taxon>
        <taxon>Peloderinae</taxon>
        <taxon>Caenorhabditis</taxon>
    </lineage>
</organism>
<accession>Q9GYG4</accession>
<protein>
    <recommendedName>
        <fullName evidence="1">Inosine triphosphate pyrophosphatase</fullName>
        <shortName evidence="1">ITPase</shortName>
        <shortName evidence="1">Inosine triphosphatase</shortName>
        <ecNumber evidence="1">3.6.1.66</ecNumber>
    </recommendedName>
    <alternativeName>
        <fullName evidence="1">Non-canonical purine NTP pyrophosphatase</fullName>
    </alternativeName>
    <alternativeName>
        <fullName evidence="1">Non-standard purine NTP pyrophosphatase</fullName>
    </alternativeName>
    <alternativeName>
        <fullName evidence="1">Nucleoside-triphosphate diphosphatase</fullName>
    </alternativeName>
    <alternativeName>
        <fullName evidence="1">Nucleoside-triphosphate pyrophosphatase</fullName>
        <shortName evidence="1">NTPase</shortName>
    </alternativeName>
    <alternativeName>
        <fullName evidence="1">XTP/dITP diphosphatase</fullName>
    </alternativeName>
</protein>
<proteinExistence type="evidence at transcript level"/>
<sequence length="184" mass="20584">MSLRKINFVTGNVKKLEEVKAILKNFEVSNVDVDLDEFQGEPEFIAERKCREAVEAVKGPVLVEDTSLCFNAMGGLPGPYIKWFLKNLKPEGLHNMLAGFSDKTAYAQCIFAYTEGLGKPIHVFAGKCPGQIVAPRGDTAFGWDPCFQPDGFKETFGEMDKDVKNEISHRAKALELLKEYFQNN</sequence>